<evidence type="ECO:0000255" key="1">
    <source>
        <dbReference type="HAMAP-Rule" id="MF_00101"/>
    </source>
</evidence>
<reference key="1">
    <citation type="journal article" date="2008" name="Proc. Natl. Acad. Sci. U.S.A.">
        <title>The genome of Clostridium kluyveri, a strict anaerobe with unique metabolic features.</title>
        <authorList>
            <person name="Seedorf H."/>
            <person name="Fricke W.F."/>
            <person name="Veith B."/>
            <person name="Brueggemann H."/>
            <person name="Liesegang H."/>
            <person name="Strittmatter A."/>
            <person name="Miethke M."/>
            <person name="Buckel W."/>
            <person name="Hinderberger J."/>
            <person name="Li F."/>
            <person name="Hagemeier C."/>
            <person name="Thauer R.K."/>
            <person name="Gottschalk G."/>
        </authorList>
    </citation>
    <scope>NUCLEOTIDE SEQUENCE [LARGE SCALE GENOMIC DNA]</scope>
    <source>
        <strain>ATCC 8527 / DSM 555 / NBRC 12016 / NCIMB 10680 / K1</strain>
    </source>
</reference>
<feature type="chain" id="PRO_1000075636" description="Holo-[acyl-carrier-protein] synthase">
    <location>
        <begin position="1"/>
        <end position="134"/>
    </location>
</feature>
<feature type="binding site" evidence="1">
    <location>
        <position position="8"/>
    </location>
    <ligand>
        <name>Mg(2+)</name>
        <dbReference type="ChEBI" id="CHEBI:18420"/>
    </ligand>
</feature>
<feature type="binding site" evidence="1">
    <location>
        <position position="56"/>
    </location>
    <ligand>
        <name>Mg(2+)</name>
        <dbReference type="ChEBI" id="CHEBI:18420"/>
    </ligand>
</feature>
<accession>A5N379</accession>
<proteinExistence type="inferred from homology"/>
<keyword id="KW-0963">Cytoplasm</keyword>
<keyword id="KW-0275">Fatty acid biosynthesis</keyword>
<keyword id="KW-0276">Fatty acid metabolism</keyword>
<keyword id="KW-0444">Lipid biosynthesis</keyword>
<keyword id="KW-0443">Lipid metabolism</keyword>
<keyword id="KW-0460">Magnesium</keyword>
<keyword id="KW-0479">Metal-binding</keyword>
<keyword id="KW-1185">Reference proteome</keyword>
<keyword id="KW-0808">Transferase</keyword>
<dbReference type="EC" id="2.7.8.7" evidence="1"/>
<dbReference type="EMBL" id="CP000673">
    <property type="protein sequence ID" value="EDK35575.1"/>
    <property type="molecule type" value="Genomic_DNA"/>
</dbReference>
<dbReference type="RefSeq" id="WP_012103907.1">
    <property type="nucleotide sequence ID" value="NC_009706.1"/>
</dbReference>
<dbReference type="SMR" id="A5N379"/>
<dbReference type="STRING" id="431943.CKL_3584"/>
<dbReference type="KEGG" id="ckl:CKL_3584"/>
<dbReference type="eggNOG" id="COG0736">
    <property type="taxonomic scope" value="Bacteria"/>
</dbReference>
<dbReference type="HOGENOM" id="CLU_089696_0_2_9"/>
<dbReference type="Proteomes" id="UP000002411">
    <property type="component" value="Chromosome"/>
</dbReference>
<dbReference type="GO" id="GO:0005737">
    <property type="term" value="C:cytoplasm"/>
    <property type="evidence" value="ECO:0007669"/>
    <property type="project" value="UniProtKB-SubCell"/>
</dbReference>
<dbReference type="GO" id="GO:0008897">
    <property type="term" value="F:holo-[acyl-carrier-protein] synthase activity"/>
    <property type="evidence" value="ECO:0007669"/>
    <property type="project" value="UniProtKB-UniRule"/>
</dbReference>
<dbReference type="GO" id="GO:0000287">
    <property type="term" value="F:magnesium ion binding"/>
    <property type="evidence" value="ECO:0007669"/>
    <property type="project" value="UniProtKB-UniRule"/>
</dbReference>
<dbReference type="GO" id="GO:0006633">
    <property type="term" value="P:fatty acid biosynthetic process"/>
    <property type="evidence" value="ECO:0007669"/>
    <property type="project" value="UniProtKB-UniRule"/>
</dbReference>
<dbReference type="Gene3D" id="3.90.470.20">
    <property type="entry name" value="4'-phosphopantetheinyl transferase domain"/>
    <property type="match status" value="1"/>
</dbReference>
<dbReference type="HAMAP" id="MF_00101">
    <property type="entry name" value="AcpS"/>
    <property type="match status" value="1"/>
</dbReference>
<dbReference type="InterPro" id="IPR008278">
    <property type="entry name" value="4-PPantetheinyl_Trfase_dom"/>
</dbReference>
<dbReference type="InterPro" id="IPR037143">
    <property type="entry name" value="4-PPantetheinyl_Trfase_dom_sf"/>
</dbReference>
<dbReference type="InterPro" id="IPR002582">
    <property type="entry name" value="ACPS"/>
</dbReference>
<dbReference type="InterPro" id="IPR004568">
    <property type="entry name" value="Ppantetheine-prot_Trfase_dom"/>
</dbReference>
<dbReference type="NCBIfam" id="TIGR00516">
    <property type="entry name" value="acpS"/>
    <property type="match status" value="1"/>
</dbReference>
<dbReference type="NCBIfam" id="TIGR00556">
    <property type="entry name" value="pantethn_trn"/>
    <property type="match status" value="1"/>
</dbReference>
<dbReference type="Pfam" id="PF01648">
    <property type="entry name" value="ACPS"/>
    <property type="match status" value="1"/>
</dbReference>
<dbReference type="SUPFAM" id="SSF56214">
    <property type="entry name" value="4'-phosphopantetheinyl transferase"/>
    <property type="match status" value="1"/>
</dbReference>
<sequence length="134" mass="15137">MIFGVGVDIVEIRRIKEAIEKHNTFIDRIFSKNEIEYLKNRNLRPEFVAGRFAAKEAVVKSLGSGFRGFDFKDIEIDRTASGRPTVVLKGKAKLMANKYGNYKIHLSISHGVDNAIAYAIMEVDKIEDSDCKDI</sequence>
<protein>
    <recommendedName>
        <fullName evidence="1">Holo-[acyl-carrier-protein] synthase</fullName>
        <shortName evidence="1">Holo-ACP synthase</shortName>
        <ecNumber evidence="1">2.7.8.7</ecNumber>
    </recommendedName>
    <alternativeName>
        <fullName evidence="1">4'-phosphopantetheinyl transferase AcpS</fullName>
    </alternativeName>
</protein>
<comment type="function">
    <text evidence="1">Transfers the 4'-phosphopantetheine moiety from coenzyme A to a Ser of acyl-carrier-protein.</text>
</comment>
<comment type="catalytic activity">
    <reaction evidence="1">
        <text>apo-[ACP] + CoA = holo-[ACP] + adenosine 3',5'-bisphosphate + H(+)</text>
        <dbReference type="Rhea" id="RHEA:12068"/>
        <dbReference type="Rhea" id="RHEA-COMP:9685"/>
        <dbReference type="Rhea" id="RHEA-COMP:9690"/>
        <dbReference type="ChEBI" id="CHEBI:15378"/>
        <dbReference type="ChEBI" id="CHEBI:29999"/>
        <dbReference type="ChEBI" id="CHEBI:57287"/>
        <dbReference type="ChEBI" id="CHEBI:58343"/>
        <dbReference type="ChEBI" id="CHEBI:64479"/>
        <dbReference type="EC" id="2.7.8.7"/>
    </reaction>
</comment>
<comment type="cofactor">
    <cofactor evidence="1">
        <name>Mg(2+)</name>
        <dbReference type="ChEBI" id="CHEBI:18420"/>
    </cofactor>
</comment>
<comment type="subcellular location">
    <subcellularLocation>
        <location evidence="1">Cytoplasm</location>
    </subcellularLocation>
</comment>
<comment type="similarity">
    <text evidence="1">Belongs to the P-Pant transferase superfamily. AcpS family.</text>
</comment>
<gene>
    <name evidence="1" type="primary">acpS</name>
    <name type="ordered locus">CKL_3584</name>
</gene>
<organism>
    <name type="scientific">Clostridium kluyveri (strain ATCC 8527 / DSM 555 / NBRC 12016 / NCIMB 10680 / K1)</name>
    <dbReference type="NCBI Taxonomy" id="431943"/>
    <lineage>
        <taxon>Bacteria</taxon>
        <taxon>Bacillati</taxon>
        <taxon>Bacillota</taxon>
        <taxon>Clostridia</taxon>
        <taxon>Eubacteriales</taxon>
        <taxon>Clostridiaceae</taxon>
        <taxon>Clostridium</taxon>
    </lineage>
</organism>
<name>ACPS_CLOK5</name>